<name>RUVC_CALS8</name>
<evidence type="ECO:0000255" key="1">
    <source>
        <dbReference type="HAMAP-Rule" id="MF_00034"/>
    </source>
</evidence>
<protein>
    <recommendedName>
        <fullName evidence="1">Crossover junction endodeoxyribonuclease RuvC</fullName>
        <ecNumber evidence="1">3.1.21.10</ecNumber>
    </recommendedName>
    <alternativeName>
        <fullName evidence="1">Holliday junction nuclease RuvC</fullName>
    </alternativeName>
    <alternativeName>
        <fullName evidence="1">Holliday junction resolvase RuvC</fullName>
    </alternativeName>
</protein>
<keyword id="KW-0963">Cytoplasm</keyword>
<keyword id="KW-0227">DNA damage</keyword>
<keyword id="KW-0233">DNA recombination</keyword>
<keyword id="KW-0234">DNA repair</keyword>
<keyword id="KW-0238">DNA-binding</keyword>
<keyword id="KW-0255">Endonuclease</keyword>
<keyword id="KW-0378">Hydrolase</keyword>
<keyword id="KW-0460">Magnesium</keyword>
<keyword id="KW-0479">Metal-binding</keyword>
<keyword id="KW-0540">Nuclease</keyword>
<proteinExistence type="inferred from homology"/>
<accession>A4XJS1</accession>
<gene>
    <name evidence="1" type="primary">ruvC</name>
    <name type="ordered locus">Csac_1564</name>
</gene>
<reference key="1">
    <citation type="submission" date="2007-04" db="EMBL/GenBank/DDBJ databases">
        <title>Genome sequence of the thermophilic hydrogen-producing bacterium Caldicellulosiruptor saccharolyticus DSM 8903.</title>
        <authorList>
            <person name="Copeland A."/>
            <person name="Lucas S."/>
            <person name="Lapidus A."/>
            <person name="Barry K."/>
            <person name="Detter J.C."/>
            <person name="Glavina del Rio T."/>
            <person name="Hammon N."/>
            <person name="Israni S."/>
            <person name="Dalin E."/>
            <person name="Tice H."/>
            <person name="Pitluck S."/>
            <person name="Kiss H."/>
            <person name="Brettin T."/>
            <person name="Bruce D."/>
            <person name="Han C."/>
            <person name="Schmutz J."/>
            <person name="Larimer F."/>
            <person name="Land M."/>
            <person name="Hauser L."/>
            <person name="Kyrpides N."/>
            <person name="Lykidis A."/>
            <person name="van de Werken H.J.G."/>
            <person name="Verhaart M.R.A."/>
            <person name="VanFossen A.L."/>
            <person name="Lewis D.L."/>
            <person name="Nichols J.D."/>
            <person name="Goorissen H.P."/>
            <person name="van Niel E.W.J."/>
            <person name="Stams F.J.M."/>
            <person name="Willquist K.U."/>
            <person name="Ward D.E."/>
            <person name="van der Oost J."/>
            <person name="Kelly R.M."/>
            <person name="Kengen S.M.W."/>
            <person name="Richardson P."/>
        </authorList>
    </citation>
    <scope>NUCLEOTIDE SEQUENCE [LARGE SCALE GENOMIC DNA]</scope>
    <source>
        <strain>ATCC 43494 / DSM 8903 / Tp8T 6331</strain>
    </source>
</reference>
<comment type="function">
    <text evidence="1">The RuvA-RuvB-RuvC complex processes Holliday junction (HJ) DNA during genetic recombination and DNA repair. Endonuclease that resolves HJ intermediates. Cleaves cruciform DNA by making single-stranded nicks across the HJ at symmetrical positions within the homologous arms, yielding a 5'-phosphate and a 3'-hydroxyl group; requires a central core of homology in the junction. The consensus cleavage sequence is 5'-(A/T)TT(C/G)-3'. Cleavage occurs on the 3'-side of the TT dinucleotide at the point of strand exchange. HJ branch migration catalyzed by RuvA-RuvB allows RuvC to scan DNA until it finds its consensus sequence, where it cleaves and resolves the cruciform DNA.</text>
</comment>
<comment type="catalytic activity">
    <reaction evidence="1">
        <text>Endonucleolytic cleavage at a junction such as a reciprocal single-stranded crossover between two homologous DNA duplexes (Holliday junction).</text>
        <dbReference type="EC" id="3.1.21.10"/>
    </reaction>
</comment>
<comment type="cofactor">
    <cofactor evidence="1">
        <name>Mg(2+)</name>
        <dbReference type="ChEBI" id="CHEBI:18420"/>
    </cofactor>
    <text evidence="1">Binds 2 Mg(2+) ion per subunit.</text>
</comment>
<comment type="subunit">
    <text evidence="1">Homodimer which binds Holliday junction (HJ) DNA. The HJ becomes 2-fold symmetrical on binding to RuvC with unstacked arms; it has a different conformation from HJ DNA in complex with RuvA. In the full resolvosome a probable DNA-RuvA(4)-RuvB(12)-RuvC(2) complex forms which resolves the HJ.</text>
</comment>
<comment type="subcellular location">
    <subcellularLocation>
        <location evidence="1">Cytoplasm</location>
    </subcellularLocation>
</comment>
<comment type="similarity">
    <text evidence="1">Belongs to the RuvC family.</text>
</comment>
<feature type="chain" id="PRO_1000002735" description="Crossover junction endodeoxyribonuclease RuvC">
    <location>
        <begin position="1"/>
        <end position="166"/>
    </location>
</feature>
<feature type="active site" evidence="1">
    <location>
        <position position="7"/>
    </location>
</feature>
<feature type="active site" evidence="1">
    <location>
        <position position="68"/>
    </location>
</feature>
<feature type="active site" evidence="1">
    <location>
        <position position="141"/>
    </location>
</feature>
<feature type="binding site" evidence="1">
    <location>
        <position position="7"/>
    </location>
    <ligand>
        <name>Mg(2+)</name>
        <dbReference type="ChEBI" id="CHEBI:18420"/>
        <label>1</label>
    </ligand>
</feature>
<feature type="binding site" evidence="1">
    <location>
        <position position="68"/>
    </location>
    <ligand>
        <name>Mg(2+)</name>
        <dbReference type="ChEBI" id="CHEBI:18420"/>
        <label>2</label>
    </ligand>
</feature>
<feature type="binding site" evidence="1">
    <location>
        <position position="141"/>
    </location>
    <ligand>
        <name>Mg(2+)</name>
        <dbReference type="ChEBI" id="CHEBI:18420"/>
        <label>1</label>
    </ligand>
</feature>
<sequence length="166" mass="18266">MRVLGIDPGIALTGYGIIESKNGSEFKVIDYGRIETSSSLKKSMRLLHLYTELCSIISLYQPDVVAIEELFFSKNSKTAITIGEARGVIILTCIQNNLSIYEYTPLQVKQSITGYGRADKTQIQKMVKSLLGLSEIPKPDDVADALAVAMCHILSSSSVLYQEDEV</sequence>
<dbReference type="EC" id="3.1.21.10" evidence="1"/>
<dbReference type="EMBL" id="CP000679">
    <property type="protein sequence ID" value="ABP67156.1"/>
    <property type="molecule type" value="Genomic_DNA"/>
</dbReference>
<dbReference type="RefSeq" id="WP_011917091.1">
    <property type="nucleotide sequence ID" value="NC_009437.1"/>
</dbReference>
<dbReference type="SMR" id="A4XJS1"/>
<dbReference type="STRING" id="351627.Csac_1564"/>
<dbReference type="KEGG" id="csc:Csac_1564"/>
<dbReference type="eggNOG" id="COG0817">
    <property type="taxonomic scope" value="Bacteria"/>
</dbReference>
<dbReference type="HOGENOM" id="CLU_091257_3_1_9"/>
<dbReference type="Proteomes" id="UP000000256">
    <property type="component" value="Chromosome"/>
</dbReference>
<dbReference type="GO" id="GO:0005737">
    <property type="term" value="C:cytoplasm"/>
    <property type="evidence" value="ECO:0007669"/>
    <property type="project" value="UniProtKB-SubCell"/>
</dbReference>
<dbReference type="GO" id="GO:0048476">
    <property type="term" value="C:Holliday junction resolvase complex"/>
    <property type="evidence" value="ECO:0007669"/>
    <property type="project" value="UniProtKB-UniRule"/>
</dbReference>
<dbReference type="GO" id="GO:0008821">
    <property type="term" value="F:crossover junction DNA endonuclease activity"/>
    <property type="evidence" value="ECO:0007669"/>
    <property type="project" value="UniProtKB-UniRule"/>
</dbReference>
<dbReference type="GO" id="GO:0003677">
    <property type="term" value="F:DNA binding"/>
    <property type="evidence" value="ECO:0007669"/>
    <property type="project" value="UniProtKB-KW"/>
</dbReference>
<dbReference type="GO" id="GO:0000287">
    <property type="term" value="F:magnesium ion binding"/>
    <property type="evidence" value="ECO:0007669"/>
    <property type="project" value="UniProtKB-UniRule"/>
</dbReference>
<dbReference type="GO" id="GO:0006310">
    <property type="term" value="P:DNA recombination"/>
    <property type="evidence" value="ECO:0007669"/>
    <property type="project" value="UniProtKB-UniRule"/>
</dbReference>
<dbReference type="GO" id="GO:0006281">
    <property type="term" value="P:DNA repair"/>
    <property type="evidence" value="ECO:0007669"/>
    <property type="project" value="UniProtKB-UniRule"/>
</dbReference>
<dbReference type="CDD" id="cd16962">
    <property type="entry name" value="RuvC"/>
    <property type="match status" value="1"/>
</dbReference>
<dbReference type="FunFam" id="3.30.420.10:FF:000002">
    <property type="entry name" value="Crossover junction endodeoxyribonuclease RuvC"/>
    <property type="match status" value="1"/>
</dbReference>
<dbReference type="Gene3D" id="3.30.420.10">
    <property type="entry name" value="Ribonuclease H-like superfamily/Ribonuclease H"/>
    <property type="match status" value="1"/>
</dbReference>
<dbReference type="HAMAP" id="MF_00034">
    <property type="entry name" value="RuvC"/>
    <property type="match status" value="1"/>
</dbReference>
<dbReference type="InterPro" id="IPR012337">
    <property type="entry name" value="RNaseH-like_sf"/>
</dbReference>
<dbReference type="InterPro" id="IPR036397">
    <property type="entry name" value="RNaseH_sf"/>
</dbReference>
<dbReference type="InterPro" id="IPR020563">
    <property type="entry name" value="X-over_junc_endoDNase_Mg_BS"/>
</dbReference>
<dbReference type="InterPro" id="IPR002176">
    <property type="entry name" value="X-over_junc_endoDNase_RuvC"/>
</dbReference>
<dbReference type="NCBIfam" id="NF000711">
    <property type="entry name" value="PRK00039.2-1"/>
    <property type="match status" value="1"/>
</dbReference>
<dbReference type="NCBIfam" id="TIGR00228">
    <property type="entry name" value="ruvC"/>
    <property type="match status" value="1"/>
</dbReference>
<dbReference type="PANTHER" id="PTHR30194">
    <property type="entry name" value="CROSSOVER JUNCTION ENDODEOXYRIBONUCLEASE RUVC"/>
    <property type="match status" value="1"/>
</dbReference>
<dbReference type="PANTHER" id="PTHR30194:SF3">
    <property type="entry name" value="CROSSOVER JUNCTION ENDODEOXYRIBONUCLEASE RUVC"/>
    <property type="match status" value="1"/>
</dbReference>
<dbReference type="Pfam" id="PF02075">
    <property type="entry name" value="RuvC"/>
    <property type="match status" value="1"/>
</dbReference>
<dbReference type="PRINTS" id="PR00696">
    <property type="entry name" value="RSOLVASERUVC"/>
</dbReference>
<dbReference type="SUPFAM" id="SSF53098">
    <property type="entry name" value="Ribonuclease H-like"/>
    <property type="match status" value="1"/>
</dbReference>
<dbReference type="PROSITE" id="PS01321">
    <property type="entry name" value="RUVC"/>
    <property type="match status" value="1"/>
</dbReference>
<organism>
    <name type="scientific">Caldicellulosiruptor saccharolyticus (strain ATCC 43494 / DSM 8903 / Tp8T 6331)</name>
    <dbReference type="NCBI Taxonomy" id="351627"/>
    <lineage>
        <taxon>Bacteria</taxon>
        <taxon>Bacillati</taxon>
        <taxon>Bacillota</taxon>
        <taxon>Bacillota incertae sedis</taxon>
        <taxon>Caldicellulosiruptorales</taxon>
        <taxon>Caldicellulosiruptoraceae</taxon>
        <taxon>Caldicellulosiruptor</taxon>
    </lineage>
</organism>